<feature type="chain" id="PRO_0000277206" description="DNA-directed RNA polymerase subunit beta''">
    <location>
        <begin position="1"/>
        <end position="1095"/>
    </location>
</feature>
<feature type="binding site" evidence="1">
    <location>
        <position position="220"/>
    </location>
    <ligand>
        <name>Zn(2+)</name>
        <dbReference type="ChEBI" id="CHEBI:29105"/>
    </ligand>
</feature>
<feature type="binding site" evidence="1">
    <location>
        <position position="293"/>
    </location>
    <ligand>
        <name>Zn(2+)</name>
        <dbReference type="ChEBI" id="CHEBI:29105"/>
    </ligand>
</feature>
<feature type="binding site" evidence="1">
    <location>
        <position position="300"/>
    </location>
    <ligand>
        <name>Zn(2+)</name>
        <dbReference type="ChEBI" id="CHEBI:29105"/>
    </ligand>
</feature>
<feature type="binding site" evidence="1">
    <location>
        <position position="303"/>
    </location>
    <ligand>
        <name>Zn(2+)</name>
        <dbReference type="ChEBI" id="CHEBI:29105"/>
    </ligand>
</feature>
<organism>
    <name type="scientific">Zygnema circumcarinatum</name>
    <name type="common">Green alga</name>
    <dbReference type="NCBI Taxonomy" id="35869"/>
    <lineage>
        <taxon>Eukaryota</taxon>
        <taxon>Viridiplantae</taxon>
        <taxon>Streptophyta</taxon>
        <taxon>Zygnematophyceae</taxon>
        <taxon>Zygnematophycidae</taxon>
        <taxon>Zygnematales</taxon>
        <taxon>Zygnemataceae</taxon>
        <taxon>Zygnema</taxon>
    </lineage>
</organism>
<comment type="function">
    <text evidence="1">DNA-dependent RNA polymerase catalyzes the transcription of DNA into RNA using the four ribonucleoside triphosphates as substrates.</text>
</comment>
<comment type="catalytic activity">
    <reaction evidence="1">
        <text>RNA(n) + a ribonucleoside 5'-triphosphate = RNA(n+1) + diphosphate</text>
        <dbReference type="Rhea" id="RHEA:21248"/>
        <dbReference type="Rhea" id="RHEA-COMP:14527"/>
        <dbReference type="Rhea" id="RHEA-COMP:17342"/>
        <dbReference type="ChEBI" id="CHEBI:33019"/>
        <dbReference type="ChEBI" id="CHEBI:61557"/>
        <dbReference type="ChEBI" id="CHEBI:140395"/>
        <dbReference type="EC" id="2.7.7.6"/>
    </reaction>
</comment>
<comment type="cofactor">
    <cofactor evidence="1">
        <name>Zn(2+)</name>
        <dbReference type="ChEBI" id="CHEBI:29105"/>
    </cofactor>
    <text evidence="1">Binds 1 Zn(2+) ion per subunit.</text>
</comment>
<comment type="subunit">
    <text evidence="1">In plastids the minimal PEP RNA polymerase catalytic core is composed of four subunits: alpha, beta, beta', and beta''. When a (nuclear-encoded) sigma factor is associated with the core the holoenzyme is formed, which can initiate transcription.</text>
</comment>
<comment type="subcellular location">
    <subcellularLocation>
        <location evidence="1">Plastid</location>
        <location evidence="1">Chloroplast</location>
    </subcellularLocation>
</comment>
<comment type="similarity">
    <text evidence="1">Belongs to the RNA polymerase beta' chain family. RpoC2 subfamily.</text>
</comment>
<sequence>MAELKNRIFYNQVMDKSAIKQLIIRLVACLGRVCTAHILDQLKTLGFQYSTQTGISLGIDDLLASPLKNWILQDAENEANVSQEYCRHGYIHAVERLRQIVETWHTTSEFLKREMTVSFNILDGFNPVHMMSFSGARGNVSQVHQLVGMRGLISDPQGNIIDLPIQSNLREGLSLTEYIISCYGARKGVVDTAIRTADAGYLTRRLVEVAQHVVIRNVDCNTYEGIILRSIRTRQGNAYLTQENRIIGRVLARPLYFGKRCIAVRNQDIGPDLAAKLSIISPQAILVRSPITCKTTDWVCQLCYGWGVNQGKMVSLGEAIGVVAGQSIGEPGTQLTLRTFHTGGVFTGDIANHLRAPFNGIAHFETHNCKPTRNRHGRLVWKCLQDLTITVIGQGKKHSLNVPSQSLLLINNNQYVESKQVIAEVRASIAPIKEKVQRNIYSYLQGEVVHTRSALRLSNAFSGTILLIHHNPNTGHLWIWSGKLYQLSGQQASSIYTSEDFIQTNITVANKRYLKFDTHKISNKKVLKSVLIGKFTRFKQVKSIQTGTVRSVLIQKPDTLRMVVLSSVDQLEITMHKTPYIMEPLLTQKISNNILNLTSYPKSSTLISKQKNTVSSFASIHIKRPTIGFQFQLPIVPKIRCYSLGLLGKLQRPLQYNLVLSSPTQPIFIDRYYNTFTNWCYLNEHGNSYNLYGLQMIVLDKKLYNNNSISGLFNTYRNIPKIGQLICKGTFVQQTTQLSESGKIVSIFKHKIVLRLSQPYLLAPGTFIHPDCYDVINRGDIVITMMYEQLRTTDIIQGLPKAEQLLEARSFNEVVLKLENDFVMLTERIARQLRSLSRSYMLSTKESTKHSQIDLVNRIQTVYLSQGVRIVDKHIEIIVRQMSSKVMLVENGDPLAVSSGGLICLPLPPIGSFLPENWIEIPLSYVIDNHTFLPRELVELTRAQKINYVIQNPVAYKPVLLGITKASLNTNSFISEASFQQTARVLSKSAIKNRVDWIRGLQENVLFGRMIPAGTGCREISSQLQYGNIFQKKWAQHTKWKLFVNSFGLNLSCLQIYLHFQAYCLESTNEQPQSNLHVHNSRIFPFTTICSILKS</sequence>
<geneLocation type="chloroplast"/>
<proteinExistence type="inferred from homology"/>
<name>RPOC2_ZYGCR</name>
<reference key="1">
    <citation type="journal article" date="2005" name="BMC Biol.">
        <title>The complete chloroplast DNA sequences of the charophycean green algae Staurastrum and Zygnema reveal that the chloroplast genome underwent extensive changes during the evolution of the Zygnematales.</title>
        <authorList>
            <person name="Turmel M."/>
            <person name="Otis C."/>
            <person name="Lemieux C."/>
        </authorList>
    </citation>
    <scope>NUCLEOTIDE SEQUENCE [LARGE SCALE GENOMIC DNA]</scope>
</reference>
<evidence type="ECO:0000255" key="1">
    <source>
        <dbReference type="HAMAP-Rule" id="MF_01324"/>
    </source>
</evidence>
<protein>
    <recommendedName>
        <fullName evidence="1">DNA-directed RNA polymerase subunit beta''</fullName>
        <ecNumber evidence="1">2.7.7.6</ecNumber>
    </recommendedName>
    <alternativeName>
        <fullName evidence="1">PEP</fullName>
    </alternativeName>
    <alternativeName>
        <fullName evidence="1">Plastid-encoded RNA polymerase subunit beta''</fullName>
        <shortName evidence="1">RNA polymerase subunit beta''</shortName>
    </alternativeName>
</protein>
<dbReference type="EC" id="2.7.7.6" evidence="1"/>
<dbReference type="EMBL" id="AY958086">
    <property type="protein sequence ID" value="AAX45864.1"/>
    <property type="molecule type" value="Genomic_DNA"/>
</dbReference>
<dbReference type="RefSeq" id="YP_636564.1">
    <property type="nucleotide sequence ID" value="NC_008117.1"/>
</dbReference>
<dbReference type="SMR" id="Q32RG2"/>
<dbReference type="GeneID" id="4108184"/>
<dbReference type="GO" id="GO:0009507">
    <property type="term" value="C:chloroplast"/>
    <property type="evidence" value="ECO:0007669"/>
    <property type="project" value="UniProtKB-SubCell"/>
</dbReference>
<dbReference type="GO" id="GO:0000428">
    <property type="term" value="C:DNA-directed RNA polymerase complex"/>
    <property type="evidence" value="ECO:0007669"/>
    <property type="project" value="UniProtKB-KW"/>
</dbReference>
<dbReference type="GO" id="GO:0005739">
    <property type="term" value="C:mitochondrion"/>
    <property type="evidence" value="ECO:0007669"/>
    <property type="project" value="GOC"/>
</dbReference>
<dbReference type="GO" id="GO:0003677">
    <property type="term" value="F:DNA binding"/>
    <property type="evidence" value="ECO:0007669"/>
    <property type="project" value="UniProtKB-UniRule"/>
</dbReference>
<dbReference type="GO" id="GO:0003899">
    <property type="term" value="F:DNA-directed RNA polymerase activity"/>
    <property type="evidence" value="ECO:0007669"/>
    <property type="project" value="UniProtKB-UniRule"/>
</dbReference>
<dbReference type="GO" id="GO:0008270">
    <property type="term" value="F:zinc ion binding"/>
    <property type="evidence" value="ECO:0007669"/>
    <property type="project" value="UniProtKB-UniRule"/>
</dbReference>
<dbReference type="GO" id="GO:0006351">
    <property type="term" value="P:DNA-templated transcription"/>
    <property type="evidence" value="ECO:0007669"/>
    <property type="project" value="UniProtKB-UniRule"/>
</dbReference>
<dbReference type="CDD" id="cd02655">
    <property type="entry name" value="RNAP_beta'_C"/>
    <property type="match status" value="1"/>
</dbReference>
<dbReference type="Gene3D" id="1.10.132.30">
    <property type="match status" value="1"/>
</dbReference>
<dbReference type="Gene3D" id="1.10.150.390">
    <property type="match status" value="1"/>
</dbReference>
<dbReference type="Gene3D" id="1.10.1790.20">
    <property type="match status" value="1"/>
</dbReference>
<dbReference type="Gene3D" id="1.10.274.100">
    <property type="entry name" value="RNA polymerase Rpb1, domain 3"/>
    <property type="match status" value="1"/>
</dbReference>
<dbReference type="HAMAP" id="MF_01324">
    <property type="entry name" value="RNApol_bact_RpoC2"/>
    <property type="match status" value="1"/>
</dbReference>
<dbReference type="InterPro" id="IPR012756">
    <property type="entry name" value="DNA-dir_RpoC2_beta_pp"/>
</dbReference>
<dbReference type="InterPro" id="IPR042102">
    <property type="entry name" value="RNA_pol_Rpb1_3_sf"/>
</dbReference>
<dbReference type="InterPro" id="IPR007083">
    <property type="entry name" value="RNA_pol_Rpb1_4"/>
</dbReference>
<dbReference type="InterPro" id="IPR007081">
    <property type="entry name" value="RNA_pol_Rpb1_5"/>
</dbReference>
<dbReference type="InterPro" id="IPR038120">
    <property type="entry name" value="Rpb1_funnel_sf"/>
</dbReference>
<dbReference type="NCBIfam" id="TIGR02388">
    <property type="entry name" value="rpoC2_cyan"/>
    <property type="match status" value="1"/>
</dbReference>
<dbReference type="PANTHER" id="PTHR48443">
    <property type="entry name" value="DNA-DIRECTED RNA POLYMERASE SUBUNIT BETA"/>
    <property type="match status" value="1"/>
</dbReference>
<dbReference type="PANTHER" id="PTHR48443:SF1">
    <property type="entry name" value="DNA-DIRECTED RNA POLYMERASE SUBUNIT BETA"/>
    <property type="match status" value="1"/>
</dbReference>
<dbReference type="Pfam" id="PF05000">
    <property type="entry name" value="RNA_pol_Rpb1_4"/>
    <property type="match status" value="1"/>
</dbReference>
<dbReference type="Pfam" id="PF04998">
    <property type="entry name" value="RNA_pol_Rpb1_5"/>
    <property type="match status" value="1"/>
</dbReference>
<dbReference type="SUPFAM" id="SSF64484">
    <property type="entry name" value="beta and beta-prime subunits of DNA dependent RNA-polymerase"/>
    <property type="match status" value="1"/>
</dbReference>
<keyword id="KW-0150">Chloroplast</keyword>
<keyword id="KW-0240">DNA-directed RNA polymerase</keyword>
<keyword id="KW-0479">Metal-binding</keyword>
<keyword id="KW-0548">Nucleotidyltransferase</keyword>
<keyword id="KW-0934">Plastid</keyword>
<keyword id="KW-0804">Transcription</keyword>
<keyword id="KW-0808">Transferase</keyword>
<keyword id="KW-0862">Zinc</keyword>
<accession>Q32RG2</accession>
<gene>
    <name evidence="1" type="primary">rpoC2</name>
</gene>